<proteinExistence type="inferred from homology"/>
<sequence>MLGKIIAKLFGSRNERIIKQLSKTVKKINALEESMIALDDAALRAKTDEFRKRLTEGETLDDVLPEAFAVVREAAKRVLGLRHYDVQLIGGMVLHQGKIAEMRTGEGKTLVATLAVYLNALSGEGVHVVTVNDYLAKRDGGELGKLYSFLGLTTGIIVSGMDTEEKKAAYRADITYGTNSEFGFDYLRTNMALSPDQRLQRKLNFAIVDEVDSILIDEARTPLIISGPAEMNTELYRKLNELVPYLTLQKKDPNQEKRSLLNDEEEIETGDFSIDEKTKQVGLTEMGHAHIEKLLVEKGLIAENESLYEPKNIGLFHHLNACLRAHHLYHRDVDYIVKDGQVMIVDEFTGRTLAGRRWSDGLHQAIEIKEGVTVQQESQTLASITYQNFFRMYEKLSGMTGTADTEAYEFQDIYNLETVVIPTNRPIARIDYTDMIFLKQSGKYQAIVAEVKECLARRQPVLLGTASIETSELISDLLTKEGVAHNVLNAKQHAREAEIVANAGLPGQITIATNMAGRGTDIVLGGSLKAELDKLGADATEEEKAAVQEAWQKRHDEVIAAGGLHVIGAERHESRRIDNQLRGRSGRQGDPGSSRFYVALDDNLVRIFAGDRMAGMMERLGMGENDVIESKMVSRQIEGAQRKVEAHNFDARKHLLEYDDVANEQRKVIYNQRSVIMDAENIREMLDEMRESIVTRLITHYVPADQVRQNWEVAGLEAALLNEFGLSIAVEKEWLAKEPDLSVDEIQKRLLAAFNAIDAQKRAQYGDDMMDWAGKYVALQIIDELWKGHLATMDMLRQAIWLRSRAQKDPKREYQRESYELFIDLLANIQLQIVRLLNHITFNAPNAESTATAAEPAPEASQSQSTNDATASQNPPITEVEASKVGRNQPCPCGSGKKYKHCCGKL</sequence>
<dbReference type="EC" id="7.4.2.8" evidence="1"/>
<dbReference type="EMBL" id="CP000513">
    <property type="protein sequence ID" value="ABQ13616.1"/>
    <property type="molecule type" value="Genomic_DNA"/>
</dbReference>
<dbReference type="RefSeq" id="WP_012031286.1">
    <property type="nucleotide sequence ID" value="NC_009446.1"/>
</dbReference>
<dbReference type="SMR" id="A5EY15"/>
<dbReference type="STRING" id="246195.DNO_0973"/>
<dbReference type="KEGG" id="dno:DNO_0973"/>
<dbReference type="eggNOG" id="COG0653">
    <property type="taxonomic scope" value="Bacteria"/>
</dbReference>
<dbReference type="HOGENOM" id="CLU_005314_3_0_6"/>
<dbReference type="OrthoDB" id="9805579at2"/>
<dbReference type="Proteomes" id="UP000000248">
    <property type="component" value="Chromosome"/>
</dbReference>
<dbReference type="GO" id="GO:0031522">
    <property type="term" value="C:cell envelope Sec protein transport complex"/>
    <property type="evidence" value="ECO:0007669"/>
    <property type="project" value="TreeGrafter"/>
</dbReference>
<dbReference type="GO" id="GO:0005829">
    <property type="term" value="C:cytosol"/>
    <property type="evidence" value="ECO:0007669"/>
    <property type="project" value="TreeGrafter"/>
</dbReference>
<dbReference type="GO" id="GO:0005886">
    <property type="term" value="C:plasma membrane"/>
    <property type="evidence" value="ECO:0007669"/>
    <property type="project" value="UniProtKB-SubCell"/>
</dbReference>
<dbReference type="GO" id="GO:0005524">
    <property type="term" value="F:ATP binding"/>
    <property type="evidence" value="ECO:0007669"/>
    <property type="project" value="UniProtKB-UniRule"/>
</dbReference>
<dbReference type="GO" id="GO:0046872">
    <property type="term" value="F:metal ion binding"/>
    <property type="evidence" value="ECO:0007669"/>
    <property type="project" value="UniProtKB-KW"/>
</dbReference>
<dbReference type="GO" id="GO:0008564">
    <property type="term" value="F:protein-exporting ATPase activity"/>
    <property type="evidence" value="ECO:0007669"/>
    <property type="project" value="UniProtKB-EC"/>
</dbReference>
<dbReference type="GO" id="GO:0065002">
    <property type="term" value="P:intracellular protein transmembrane transport"/>
    <property type="evidence" value="ECO:0007669"/>
    <property type="project" value="UniProtKB-UniRule"/>
</dbReference>
<dbReference type="GO" id="GO:0017038">
    <property type="term" value="P:protein import"/>
    <property type="evidence" value="ECO:0007669"/>
    <property type="project" value="InterPro"/>
</dbReference>
<dbReference type="GO" id="GO:0006605">
    <property type="term" value="P:protein targeting"/>
    <property type="evidence" value="ECO:0007669"/>
    <property type="project" value="UniProtKB-UniRule"/>
</dbReference>
<dbReference type="GO" id="GO:0043952">
    <property type="term" value="P:protein transport by the Sec complex"/>
    <property type="evidence" value="ECO:0007669"/>
    <property type="project" value="TreeGrafter"/>
</dbReference>
<dbReference type="CDD" id="cd17928">
    <property type="entry name" value="DEXDc_SecA"/>
    <property type="match status" value="1"/>
</dbReference>
<dbReference type="CDD" id="cd18803">
    <property type="entry name" value="SF2_C_secA"/>
    <property type="match status" value="1"/>
</dbReference>
<dbReference type="FunFam" id="3.40.50.300:FF:000113">
    <property type="entry name" value="Preprotein translocase subunit SecA"/>
    <property type="match status" value="1"/>
</dbReference>
<dbReference type="FunFam" id="3.90.1440.10:FF:000001">
    <property type="entry name" value="Preprotein translocase subunit SecA"/>
    <property type="match status" value="1"/>
</dbReference>
<dbReference type="FunFam" id="3.40.50.300:FF:000334">
    <property type="entry name" value="Protein translocase subunit SecA"/>
    <property type="match status" value="1"/>
</dbReference>
<dbReference type="Gene3D" id="1.10.3060.10">
    <property type="entry name" value="Helical scaffold and wing domains of SecA"/>
    <property type="match status" value="1"/>
</dbReference>
<dbReference type="Gene3D" id="3.40.50.300">
    <property type="entry name" value="P-loop containing nucleotide triphosphate hydrolases"/>
    <property type="match status" value="2"/>
</dbReference>
<dbReference type="Gene3D" id="3.90.1440.10">
    <property type="entry name" value="SecA, preprotein cross-linking domain"/>
    <property type="match status" value="1"/>
</dbReference>
<dbReference type="HAMAP" id="MF_01382">
    <property type="entry name" value="SecA"/>
    <property type="match status" value="1"/>
</dbReference>
<dbReference type="InterPro" id="IPR014001">
    <property type="entry name" value="Helicase_ATP-bd"/>
</dbReference>
<dbReference type="InterPro" id="IPR001650">
    <property type="entry name" value="Helicase_C-like"/>
</dbReference>
<dbReference type="InterPro" id="IPR027417">
    <property type="entry name" value="P-loop_NTPase"/>
</dbReference>
<dbReference type="InterPro" id="IPR004027">
    <property type="entry name" value="SEC_C_motif"/>
</dbReference>
<dbReference type="InterPro" id="IPR000185">
    <property type="entry name" value="SecA"/>
</dbReference>
<dbReference type="InterPro" id="IPR020937">
    <property type="entry name" value="SecA_CS"/>
</dbReference>
<dbReference type="InterPro" id="IPR011115">
    <property type="entry name" value="SecA_DEAD"/>
</dbReference>
<dbReference type="InterPro" id="IPR014018">
    <property type="entry name" value="SecA_motor_DEAD"/>
</dbReference>
<dbReference type="InterPro" id="IPR011130">
    <property type="entry name" value="SecA_preprotein_X-link_dom"/>
</dbReference>
<dbReference type="InterPro" id="IPR044722">
    <property type="entry name" value="SecA_SF2_C"/>
</dbReference>
<dbReference type="InterPro" id="IPR011116">
    <property type="entry name" value="SecA_Wing/Scaffold"/>
</dbReference>
<dbReference type="InterPro" id="IPR036266">
    <property type="entry name" value="SecA_Wing/Scaffold_sf"/>
</dbReference>
<dbReference type="InterPro" id="IPR036670">
    <property type="entry name" value="SecA_X-link_sf"/>
</dbReference>
<dbReference type="NCBIfam" id="NF009538">
    <property type="entry name" value="PRK12904.1"/>
    <property type="match status" value="1"/>
</dbReference>
<dbReference type="NCBIfam" id="TIGR00963">
    <property type="entry name" value="secA"/>
    <property type="match status" value="1"/>
</dbReference>
<dbReference type="PANTHER" id="PTHR30612:SF0">
    <property type="entry name" value="CHLOROPLAST PROTEIN-TRANSPORTING ATPASE"/>
    <property type="match status" value="1"/>
</dbReference>
<dbReference type="PANTHER" id="PTHR30612">
    <property type="entry name" value="SECA INNER MEMBRANE COMPONENT OF SEC PROTEIN SECRETION SYSTEM"/>
    <property type="match status" value="1"/>
</dbReference>
<dbReference type="Pfam" id="PF21090">
    <property type="entry name" value="P-loop_SecA"/>
    <property type="match status" value="1"/>
</dbReference>
<dbReference type="Pfam" id="PF02810">
    <property type="entry name" value="SEC-C"/>
    <property type="match status" value="1"/>
</dbReference>
<dbReference type="Pfam" id="PF07517">
    <property type="entry name" value="SecA_DEAD"/>
    <property type="match status" value="1"/>
</dbReference>
<dbReference type="Pfam" id="PF01043">
    <property type="entry name" value="SecA_PP_bind"/>
    <property type="match status" value="1"/>
</dbReference>
<dbReference type="Pfam" id="PF07516">
    <property type="entry name" value="SecA_SW"/>
    <property type="match status" value="1"/>
</dbReference>
<dbReference type="PRINTS" id="PR00906">
    <property type="entry name" value="SECA"/>
</dbReference>
<dbReference type="SMART" id="SM00957">
    <property type="entry name" value="SecA_DEAD"/>
    <property type="match status" value="1"/>
</dbReference>
<dbReference type="SMART" id="SM00958">
    <property type="entry name" value="SecA_PP_bind"/>
    <property type="match status" value="1"/>
</dbReference>
<dbReference type="SUPFAM" id="SSF81886">
    <property type="entry name" value="Helical scaffold and wing domains of SecA"/>
    <property type="match status" value="1"/>
</dbReference>
<dbReference type="SUPFAM" id="SSF52540">
    <property type="entry name" value="P-loop containing nucleoside triphosphate hydrolases"/>
    <property type="match status" value="2"/>
</dbReference>
<dbReference type="SUPFAM" id="SSF81767">
    <property type="entry name" value="Pre-protein crosslinking domain of SecA"/>
    <property type="match status" value="1"/>
</dbReference>
<dbReference type="PROSITE" id="PS01312">
    <property type="entry name" value="SECA"/>
    <property type="match status" value="1"/>
</dbReference>
<dbReference type="PROSITE" id="PS51196">
    <property type="entry name" value="SECA_MOTOR_DEAD"/>
    <property type="match status" value="1"/>
</dbReference>
<reference key="1">
    <citation type="journal article" date="2007" name="Nat. Biotechnol.">
        <title>Genome sequence and identification of candidate vaccine antigens from the animal pathogen Dichelobacter nodosus.</title>
        <authorList>
            <person name="Myers G.S.A."/>
            <person name="Parker D."/>
            <person name="Al-Hasani K."/>
            <person name="Kennan R.M."/>
            <person name="Seemann T."/>
            <person name="Ren Q."/>
            <person name="Badger J.H."/>
            <person name="Selengut J.D."/>
            <person name="Deboy R.T."/>
            <person name="Tettelin H."/>
            <person name="Boyce J.D."/>
            <person name="McCarl V.P."/>
            <person name="Han X."/>
            <person name="Nelson W.C."/>
            <person name="Madupu R."/>
            <person name="Mohamoud Y."/>
            <person name="Holley T."/>
            <person name="Fedorova N."/>
            <person name="Khouri H."/>
            <person name="Bottomley S.P."/>
            <person name="Whittington R.J."/>
            <person name="Adler B."/>
            <person name="Songer J.G."/>
            <person name="Rood J.I."/>
            <person name="Paulsen I.T."/>
        </authorList>
    </citation>
    <scope>NUCLEOTIDE SEQUENCE [LARGE SCALE GENOMIC DNA]</scope>
    <source>
        <strain>VCS1703A</strain>
    </source>
</reference>
<evidence type="ECO:0000255" key="1">
    <source>
        <dbReference type="HAMAP-Rule" id="MF_01382"/>
    </source>
</evidence>
<evidence type="ECO:0000256" key="2">
    <source>
        <dbReference type="SAM" id="MobiDB-lite"/>
    </source>
</evidence>
<organism>
    <name type="scientific">Dichelobacter nodosus (strain VCS1703A)</name>
    <dbReference type="NCBI Taxonomy" id="246195"/>
    <lineage>
        <taxon>Bacteria</taxon>
        <taxon>Pseudomonadati</taxon>
        <taxon>Pseudomonadota</taxon>
        <taxon>Gammaproteobacteria</taxon>
        <taxon>Cardiobacteriales</taxon>
        <taxon>Cardiobacteriaceae</taxon>
        <taxon>Dichelobacter</taxon>
    </lineage>
</organism>
<keyword id="KW-0067">ATP-binding</keyword>
<keyword id="KW-0997">Cell inner membrane</keyword>
<keyword id="KW-1003">Cell membrane</keyword>
<keyword id="KW-0963">Cytoplasm</keyword>
<keyword id="KW-0472">Membrane</keyword>
<keyword id="KW-0479">Metal-binding</keyword>
<keyword id="KW-0547">Nucleotide-binding</keyword>
<keyword id="KW-0653">Protein transport</keyword>
<keyword id="KW-1185">Reference proteome</keyword>
<keyword id="KW-1278">Translocase</keyword>
<keyword id="KW-0811">Translocation</keyword>
<keyword id="KW-0813">Transport</keyword>
<keyword id="KW-0862">Zinc</keyword>
<gene>
    <name evidence="1" type="primary">secA</name>
    <name type="ordered locus">DNO_0973</name>
</gene>
<accession>A5EY15</accession>
<comment type="function">
    <text evidence="1">Part of the Sec protein translocase complex. Interacts with the SecYEG preprotein conducting channel. Has a central role in coupling the hydrolysis of ATP to the transfer of proteins into and across the cell membrane, serving both as a receptor for the preprotein-SecB complex and as an ATP-driven molecular motor driving the stepwise translocation of polypeptide chains across the membrane.</text>
</comment>
<comment type="catalytic activity">
    <reaction evidence="1">
        <text>ATP + H2O + cellular proteinSide 1 = ADP + phosphate + cellular proteinSide 2.</text>
        <dbReference type="EC" id="7.4.2.8"/>
    </reaction>
</comment>
<comment type="cofactor">
    <cofactor evidence="1">
        <name>Zn(2+)</name>
        <dbReference type="ChEBI" id="CHEBI:29105"/>
    </cofactor>
    <text evidence="1">May bind 1 zinc ion per subunit.</text>
</comment>
<comment type="subunit">
    <text evidence="1">Monomer and homodimer. Part of the essential Sec protein translocation apparatus which comprises SecA, SecYEG and auxiliary proteins SecDF-YajC and YidC.</text>
</comment>
<comment type="subcellular location">
    <subcellularLocation>
        <location evidence="1">Cell inner membrane</location>
        <topology evidence="1">Peripheral membrane protein</topology>
        <orientation evidence="1">Cytoplasmic side</orientation>
    </subcellularLocation>
    <subcellularLocation>
        <location evidence="1">Cytoplasm</location>
    </subcellularLocation>
    <text evidence="1">Distribution is 50-50.</text>
</comment>
<comment type="similarity">
    <text evidence="1">Belongs to the SecA family.</text>
</comment>
<feature type="chain" id="PRO_0000320794" description="Protein translocase subunit SecA">
    <location>
        <begin position="1"/>
        <end position="906"/>
    </location>
</feature>
<feature type="region of interest" description="Disordered" evidence="2">
    <location>
        <begin position="849"/>
        <end position="897"/>
    </location>
</feature>
<feature type="compositionally biased region" description="Low complexity" evidence="2">
    <location>
        <begin position="849"/>
        <end position="865"/>
    </location>
</feature>
<feature type="compositionally biased region" description="Polar residues" evidence="2">
    <location>
        <begin position="866"/>
        <end position="876"/>
    </location>
</feature>
<feature type="binding site" evidence="1">
    <location>
        <position position="87"/>
    </location>
    <ligand>
        <name>ATP</name>
        <dbReference type="ChEBI" id="CHEBI:30616"/>
    </ligand>
</feature>
<feature type="binding site" evidence="1">
    <location>
        <begin position="105"/>
        <end position="109"/>
    </location>
    <ligand>
        <name>ATP</name>
        <dbReference type="ChEBI" id="CHEBI:30616"/>
    </ligand>
</feature>
<feature type="binding site" evidence="1">
    <location>
        <position position="521"/>
    </location>
    <ligand>
        <name>ATP</name>
        <dbReference type="ChEBI" id="CHEBI:30616"/>
    </ligand>
</feature>
<feature type="binding site" evidence="1">
    <location>
        <position position="891"/>
    </location>
    <ligand>
        <name>Zn(2+)</name>
        <dbReference type="ChEBI" id="CHEBI:29105"/>
    </ligand>
</feature>
<feature type="binding site" evidence="1">
    <location>
        <position position="893"/>
    </location>
    <ligand>
        <name>Zn(2+)</name>
        <dbReference type="ChEBI" id="CHEBI:29105"/>
    </ligand>
</feature>
<feature type="binding site" evidence="1">
    <location>
        <position position="902"/>
    </location>
    <ligand>
        <name>Zn(2+)</name>
        <dbReference type="ChEBI" id="CHEBI:29105"/>
    </ligand>
</feature>
<feature type="binding site" evidence="1">
    <location>
        <position position="903"/>
    </location>
    <ligand>
        <name>Zn(2+)</name>
        <dbReference type="ChEBI" id="CHEBI:29105"/>
    </ligand>
</feature>
<protein>
    <recommendedName>
        <fullName evidence="1">Protein translocase subunit SecA</fullName>
        <ecNumber evidence="1">7.4.2.8</ecNumber>
    </recommendedName>
</protein>
<name>SECA_DICNV</name>